<name>IL12A_CAPHI</name>
<evidence type="ECO:0000250" key="1"/>
<evidence type="ECO:0000250" key="2">
    <source>
        <dbReference type="UniProtKB" id="P29459"/>
    </source>
</evidence>
<evidence type="ECO:0000250" key="3">
    <source>
        <dbReference type="UniProtKB" id="P43431"/>
    </source>
</evidence>
<evidence type="ECO:0000255" key="4"/>
<evidence type="ECO:0000305" key="5"/>
<keyword id="KW-0202">Cytokine</keyword>
<keyword id="KW-1015">Disulfide bond</keyword>
<keyword id="KW-0325">Glycoprotein</keyword>
<keyword id="KW-0339">Growth factor</keyword>
<keyword id="KW-1185">Reference proteome</keyword>
<keyword id="KW-0964">Secreted</keyword>
<keyword id="KW-0732">Signal</keyword>
<reference key="1">
    <citation type="submission" date="1997-06" db="EMBL/GenBank/DDBJ databases">
        <title>Caprine interleukin 12 35kD subunit.</title>
        <authorList>
            <person name="Beyer J.C."/>
            <person name="Kumpula-Mcwhirter N.M."/>
            <person name="Cheevers W.P."/>
        </authorList>
    </citation>
    <scope>NUCLEOTIDE SEQUENCE [MRNA]</scope>
</reference>
<proteinExistence type="evidence at transcript level"/>
<organism>
    <name type="scientific">Capra hircus</name>
    <name type="common">Goat</name>
    <dbReference type="NCBI Taxonomy" id="9925"/>
    <lineage>
        <taxon>Eukaryota</taxon>
        <taxon>Metazoa</taxon>
        <taxon>Chordata</taxon>
        <taxon>Craniata</taxon>
        <taxon>Vertebrata</taxon>
        <taxon>Euteleostomi</taxon>
        <taxon>Mammalia</taxon>
        <taxon>Eutheria</taxon>
        <taxon>Laurasiatheria</taxon>
        <taxon>Artiodactyla</taxon>
        <taxon>Ruminantia</taxon>
        <taxon>Pecora</taxon>
        <taxon>Bovidae</taxon>
        <taxon>Caprinae</taxon>
        <taxon>Capra</taxon>
    </lineage>
</organism>
<accession>O02814</accession>
<comment type="function">
    <text evidence="2 3">Heterodimerizes with IL12B to form the IL-12 cytokine or with EBI3/IL27B to form the IL-35 cytokine. IL-12 is primarily produced by professional antigen-presenting cells (APCs) such as B-cells and dendritic cells (DCs) as well as macrophages and granulocytes and regulates T-cell and natural killer-cell responses, induces the production of interferon-gamma (IFN-gamma), favors the differentiation of T-helper 1 (Th1) cells and is an important link between innate resistance and adaptive immunity. Mechanistically, exerts its biological effects through a receptor composed of IL12R1 and IL12R2 subunits. Binding to the receptor results in the rapid tyrosine phosphorylation of a number of cellular substrates including the JAK family kinases TYK2 and JAK2. In turn, recruited STAT4 gets phosphorylated and translocates to the nucleus where it regulates cytokine/growth factor responsive genes (By similarity). As part of IL-35, plays essential roles in maintaining the immune homeostasis of the liver microenvironment and also functions as an immune-suppressive cytokine (By similarity). Mediates biological events through unconventional receptors composed of IL12RB2 and gp130/IL6ST heterodimers or homodimers. Signaling requires the transcription factors STAT1 and STAT4, which form a unique heterodimer that binds to distinct DNA sites (By similarity).</text>
</comment>
<comment type="subunit">
    <text evidence="2 3">Heterodimer with IL12B; disulfide-linked. This heterodimer is known as interleukin IL-12. Heterodimer with EBI3/IL27B; not disulfide-linked. This heterodimer is known as interleukin IL-35. Interacts with NBR1; this interaction promotes IL-12 secretion (By similarity).</text>
</comment>
<comment type="subcellular location">
    <subcellularLocation>
        <location evidence="2">Secreted</location>
    </subcellularLocation>
</comment>
<comment type="similarity">
    <text evidence="5">Belongs to the IL-6 superfamily.</text>
</comment>
<protein>
    <recommendedName>
        <fullName>Interleukin-12 subunit alpha</fullName>
        <shortName>IL-12A</shortName>
    </recommendedName>
    <alternativeName>
        <fullName>Cytotoxic lymphocyte maturation factor 35 kDa subunit</fullName>
        <shortName>CLMF p35</shortName>
    </alternativeName>
    <alternativeName>
        <fullName>IL-12 subunit p35</fullName>
    </alternativeName>
</protein>
<dbReference type="EMBL" id="AF003542">
    <property type="protein sequence ID" value="AAB61287.1"/>
    <property type="molecule type" value="mRNA"/>
</dbReference>
<dbReference type="RefSeq" id="NP_001272567.1">
    <property type="nucleotide sequence ID" value="NM_001285638.1"/>
</dbReference>
<dbReference type="SMR" id="O02814"/>
<dbReference type="STRING" id="9925.ENSCHIP00000026549"/>
<dbReference type="GlyCosmos" id="O02814">
    <property type="glycosylation" value="1 site, No reported glycans"/>
</dbReference>
<dbReference type="GeneID" id="100861293"/>
<dbReference type="KEGG" id="chx:100861293"/>
<dbReference type="CTD" id="3592"/>
<dbReference type="OrthoDB" id="9893660at2759"/>
<dbReference type="Proteomes" id="UP000291000">
    <property type="component" value="Unassembled WGS sequence"/>
</dbReference>
<dbReference type="Proteomes" id="UP000694566">
    <property type="component" value="Unplaced"/>
</dbReference>
<dbReference type="GO" id="GO:0005615">
    <property type="term" value="C:extracellular space"/>
    <property type="evidence" value="ECO:0007669"/>
    <property type="project" value="UniProtKB-KW"/>
</dbReference>
<dbReference type="GO" id="GO:0005125">
    <property type="term" value="F:cytokine activity"/>
    <property type="evidence" value="ECO:0007669"/>
    <property type="project" value="UniProtKB-KW"/>
</dbReference>
<dbReference type="GO" id="GO:0008083">
    <property type="term" value="F:growth factor activity"/>
    <property type="evidence" value="ECO:0007669"/>
    <property type="project" value="UniProtKB-KW"/>
</dbReference>
<dbReference type="GO" id="GO:0005143">
    <property type="term" value="F:interleukin-12 receptor binding"/>
    <property type="evidence" value="ECO:0007669"/>
    <property type="project" value="InterPro"/>
</dbReference>
<dbReference type="GO" id="GO:0006955">
    <property type="term" value="P:immune response"/>
    <property type="evidence" value="ECO:0007669"/>
    <property type="project" value="InterPro"/>
</dbReference>
<dbReference type="FunFam" id="1.20.1250.10:FF:000020">
    <property type="entry name" value="Interleukin-12 subunit alpha"/>
    <property type="match status" value="1"/>
</dbReference>
<dbReference type="Gene3D" id="1.20.1250.10">
    <property type="match status" value="1"/>
</dbReference>
<dbReference type="InterPro" id="IPR009079">
    <property type="entry name" value="4_helix_cytokine-like_core"/>
</dbReference>
<dbReference type="InterPro" id="IPR050676">
    <property type="entry name" value="IL-12"/>
</dbReference>
<dbReference type="InterPro" id="IPR004281">
    <property type="entry name" value="IL-12_alpha"/>
</dbReference>
<dbReference type="PANTHER" id="PTHR48485:SF1">
    <property type="entry name" value="INTERLEUKIN-12 SUBUNIT ALPHA"/>
    <property type="match status" value="1"/>
</dbReference>
<dbReference type="PANTHER" id="PTHR48485">
    <property type="entry name" value="INTERLEUKIN-12 SUBUNIT BETA-RELATED"/>
    <property type="match status" value="1"/>
</dbReference>
<dbReference type="Pfam" id="PF03039">
    <property type="entry name" value="IL12"/>
    <property type="match status" value="1"/>
</dbReference>
<dbReference type="SUPFAM" id="SSF47266">
    <property type="entry name" value="4-helical cytokines"/>
    <property type="match status" value="1"/>
</dbReference>
<sequence length="221" mass="24832">MCPLRSLLLISTLVLLHHLPHLSLGRSLPITTAGPGRSCLDYSQNLLRAVSNTLQKARQTLEFYSCTSEEIDHEDITKDKTSTVEACLPLELATNESCLASRETSLITNGHCLASGKTSFMTTLCLRSIYKDLKMYHMEFQAINAKLLMDPKRQVSLDQNMLAAIAELMQALNFDSETVPQKPSLEELDFYKTKVKLCILLHAFRIRAVTIDRMMSYLSSS</sequence>
<gene>
    <name type="primary">IL12A</name>
</gene>
<feature type="signal peptide" evidence="1">
    <location>
        <begin position="1"/>
        <end position="25"/>
    </location>
</feature>
<feature type="chain" id="PRO_0000015599" description="Interleukin-12 subunit alpha">
    <location>
        <begin position="26"/>
        <end position="221"/>
    </location>
</feature>
<feature type="glycosylation site" description="N-linked (GlcNAc...) asparagine" evidence="4">
    <location>
        <position position="95"/>
    </location>
</feature>
<feature type="disulfide bond" evidence="2">
    <location>
        <begin position="39"/>
        <end position="112"/>
    </location>
</feature>
<feature type="disulfide bond" evidence="1">
    <location>
        <begin position="66"/>
        <end position="198"/>
    </location>
</feature>
<feature type="disulfide bond" evidence="1">
    <location>
        <begin position="87"/>
        <end position="125"/>
    </location>
</feature>
<feature type="disulfide bond" description="Interchain (with C-200 in IL12B)" evidence="1">
    <location>
        <position position="98"/>
    </location>
</feature>